<comment type="function">
    <text evidence="1">Catalyzes the phosphorylation of the position 2 hydroxy group of 4-diphosphocytidyl-2C-methyl-D-erythritol.</text>
</comment>
<comment type="catalytic activity">
    <reaction evidence="1">
        <text>4-CDP-2-C-methyl-D-erythritol + ATP = 4-CDP-2-C-methyl-D-erythritol 2-phosphate + ADP + H(+)</text>
        <dbReference type="Rhea" id="RHEA:18437"/>
        <dbReference type="ChEBI" id="CHEBI:15378"/>
        <dbReference type="ChEBI" id="CHEBI:30616"/>
        <dbReference type="ChEBI" id="CHEBI:57823"/>
        <dbReference type="ChEBI" id="CHEBI:57919"/>
        <dbReference type="ChEBI" id="CHEBI:456216"/>
        <dbReference type="EC" id="2.7.1.148"/>
    </reaction>
</comment>
<comment type="pathway">
    <text evidence="1">Isoprenoid biosynthesis; isopentenyl diphosphate biosynthesis via DXP pathway; isopentenyl diphosphate from 1-deoxy-D-xylulose 5-phosphate: step 3/6.</text>
</comment>
<comment type="similarity">
    <text evidence="1">Belongs to the GHMP kinase family. IspE subfamily.</text>
</comment>
<name>ISPE_ANAD2</name>
<evidence type="ECO:0000255" key="1">
    <source>
        <dbReference type="HAMAP-Rule" id="MF_00061"/>
    </source>
</evidence>
<evidence type="ECO:0000256" key="2">
    <source>
        <dbReference type="SAM" id="MobiDB-lite"/>
    </source>
</evidence>
<feature type="chain" id="PRO_1000117873" description="4-diphosphocytidyl-2-C-methyl-D-erythritol kinase">
    <location>
        <begin position="1"/>
        <end position="313"/>
    </location>
</feature>
<feature type="region of interest" description="Disordered" evidence="2">
    <location>
        <begin position="289"/>
        <end position="313"/>
    </location>
</feature>
<feature type="compositionally biased region" description="Low complexity" evidence="2">
    <location>
        <begin position="292"/>
        <end position="304"/>
    </location>
</feature>
<feature type="active site" evidence="1">
    <location>
        <position position="10"/>
    </location>
</feature>
<feature type="active site" evidence="1">
    <location>
        <position position="136"/>
    </location>
</feature>
<feature type="binding site" evidence="1">
    <location>
        <begin position="95"/>
        <end position="105"/>
    </location>
    <ligand>
        <name>ATP</name>
        <dbReference type="ChEBI" id="CHEBI:30616"/>
    </ligand>
</feature>
<accession>B8J808</accession>
<proteinExistence type="inferred from homology"/>
<gene>
    <name evidence="1" type="primary">ispE</name>
    <name type="ordered locus">A2cp1_0141</name>
</gene>
<organism>
    <name type="scientific">Anaeromyxobacter dehalogenans (strain 2CP-1 / ATCC BAA-258)</name>
    <dbReference type="NCBI Taxonomy" id="455488"/>
    <lineage>
        <taxon>Bacteria</taxon>
        <taxon>Pseudomonadati</taxon>
        <taxon>Myxococcota</taxon>
        <taxon>Myxococcia</taxon>
        <taxon>Myxococcales</taxon>
        <taxon>Cystobacterineae</taxon>
        <taxon>Anaeromyxobacteraceae</taxon>
        <taxon>Anaeromyxobacter</taxon>
    </lineage>
</organism>
<protein>
    <recommendedName>
        <fullName evidence="1">4-diphosphocytidyl-2-C-methyl-D-erythritol kinase</fullName>
        <shortName evidence="1">CMK</shortName>
        <ecNumber evidence="1">2.7.1.148</ecNumber>
    </recommendedName>
    <alternativeName>
        <fullName evidence="1">4-(cytidine-5'-diphospho)-2-C-methyl-D-erythritol kinase</fullName>
    </alternativeName>
</protein>
<sequence>MRLVTLAPAKVNLVLRVGPVRADGYHDLRTLMVPLDLGDRVDVRVSPRRGPVRCTVPGRPELDGPENLAARAAEAFRRRFGVDRAVSIRIEKRTPVTAGLGGGSSDAAAVLRCLARALRVRDGAALAALALEIGSDVPFFLGPGPAWAAGRGERLSRAEVPPLDLVLVYPADPSLAIRAGDAYRWLDEARASGSQAPRRLGRPGRWRPTLLGNDLQAPCVARKPALQALLGLLVGAGATAAIMSGSGPTVFGIFPGRGAARGAALAIQGRAKGGAAGVQVLLARTVRRHPRVSPWRSPRSASSRSTRRSSRPT</sequence>
<keyword id="KW-0067">ATP-binding</keyword>
<keyword id="KW-0414">Isoprene biosynthesis</keyword>
<keyword id="KW-0418">Kinase</keyword>
<keyword id="KW-0547">Nucleotide-binding</keyword>
<keyword id="KW-0808">Transferase</keyword>
<reference key="1">
    <citation type="submission" date="2009-01" db="EMBL/GenBank/DDBJ databases">
        <title>Complete sequence of Anaeromyxobacter dehalogenans 2CP-1.</title>
        <authorList>
            <person name="Lucas S."/>
            <person name="Copeland A."/>
            <person name="Lapidus A."/>
            <person name="Glavina del Rio T."/>
            <person name="Dalin E."/>
            <person name="Tice H."/>
            <person name="Bruce D."/>
            <person name="Goodwin L."/>
            <person name="Pitluck S."/>
            <person name="Saunders E."/>
            <person name="Brettin T."/>
            <person name="Detter J.C."/>
            <person name="Han C."/>
            <person name="Larimer F."/>
            <person name="Land M."/>
            <person name="Hauser L."/>
            <person name="Kyrpides N."/>
            <person name="Ovchinnikova G."/>
            <person name="Beliaev A.S."/>
            <person name="Richardson P."/>
        </authorList>
    </citation>
    <scope>NUCLEOTIDE SEQUENCE [LARGE SCALE GENOMIC DNA]</scope>
    <source>
        <strain>2CP-1 / ATCC BAA-258</strain>
    </source>
</reference>
<dbReference type="EC" id="2.7.1.148" evidence="1"/>
<dbReference type="EMBL" id="CP001359">
    <property type="protein sequence ID" value="ACL63500.1"/>
    <property type="molecule type" value="Genomic_DNA"/>
</dbReference>
<dbReference type="RefSeq" id="WP_012631582.1">
    <property type="nucleotide sequence ID" value="NC_011891.1"/>
</dbReference>
<dbReference type="SMR" id="B8J808"/>
<dbReference type="KEGG" id="acp:A2cp1_0141"/>
<dbReference type="HOGENOM" id="CLU_053057_1_1_7"/>
<dbReference type="UniPathway" id="UPA00056">
    <property type="reaction ID" value="UER00094"/>
</dbReference>
<dbReference type="Proteomes" id="UP000007089">
    <property type="component" value="Chromosome"/>
</dbReference>
<dbReference type="GO" id="GO:0050515">
    <property type="term" value="F:4-(cytidine 5'-diphospho)-2-C-methyl-D-erythritol kinase activity"/>
    <property type="evidence" value="ECO:0007669"/>
    <property type="project" value="UniProtKB-UniRule"/>
</dbReference>
<dbReference type="GO" id="GO:0005524">
    <property type="term" value="F:ATP binding"/>
    <property type="evidence" value="ECO:0007669"/>
    <property type="project" value="UniProtKB-UniRule"/>
</dbReference>
<dbReference type="GO" id="GO:0019288">
    <property type="term" value="P:isopentenyl diphosphate biosynthetic process, methylerythritol 4-phosphate pathway"/>
    <property type="evidence" value="ECO:0007669"/>
    <property type="project" value="UniProtKB-UniRule"/>
</dbReference>
<dbReference type="GO" id="GO:0016114">
    <property type="term" value="P:terpenoid biosynthetic process"/>
    <property type="evidence" value="ECO:0007669"/>
    <property type="project" value="InterPro"/>
</dbReference>
<dbReference type="Gene3D" id="3.30.230.10">
    <property type="match status" value="1"/>
</dbReference>
<dbReference type="Gene3D" id="3.30.70.890">
    <property type="entry name" value="GHMP kinase, C-terminal domain"/>
    <property type="match status" value="1"/>
</dbReference>
<dbReference type="HAMAP" id="MF_00061">
    <property type="entry name" value="IspE"/>
    <property type="match status" value="1"/>
</dbReference>
<dbReference type="InterPro" id="IPR013750">
    <property type="entry name" value="GHMP_kinase_C_dom"/>
</dbReference>
<dbReference type="InterPro" id="IPR036554">
    <property type="entry name" value="GHMP_kinase_C_sf"/>
</dbReference>
<dbReference type="InterPro" id="IPR006204">
    <property type="entry name" value="GHMP_kinase_N_dom"/>
</dbReference>
<dbReference type="InterPro" id="IPR004424">
    <property type="entry name" value="IspE"/>
</dbReference>
<dbReference type="InterPro" id="IPR020568">
    <property type="entry name" value="Ribosomal_Su5_D2-typ_SF"/>
</dbReference>
<dbReference type="InterPro" id="IPR014721">
    <property type="entry name" value="Ribsml_uS5_D2-typ_fold_subgr"/>
</dbReference>
<dbReference type="NCBIfam" id="TIGR00154">
    <property type="entry name" value="ispE"/>
    <property type="match status" value="1"/>
</dbReference>
<dbReference type="PANTHER" id="PTHR43527">
    <property type="entry name" value="4-DIPHOSPHOCYTIDYL-2-C-METHYL-D-ERYTHRITOL KINASE, CHLOROPLASTIC"/>
    <property type="match status" value="1"/>
</dbReference>
<dbReference type="PANTHER" id="PTHR43527:SF2">
    <property type="entry name" value="4-DIPHOSPHOCYTIDYL-2-C-METHYL-D-ERYTHRITOL KINASE, CHLOROPLASTIC"/>
    <property type="match status" value="1"/>
</dbReference>
<dbReference type="Pfam" id="PF08544">
    <property type="entry name" value="GHMP_kinases_C"/>
    <property type="match status" value="1"/>
</dbReference>
<dbReference type="Pfam" id="PF00288">
    <property type="entry name" value="GHMP_kinases_N"/>
    <property type="match status" value="1"/>
</dbReference>
<dbReference type="PIRSF" id="PIRSF010376">
    <property type="entry name" value="IspE"/>
    <property type="match status" value="1"/>
</dbReference>
<dbReference type="SUPFAM" id="SSF55060">
    <property type="entry name" value="GHMP Kinase, C-terminal domain"/>
    <property type="match status" value="1"/>
</dbReference>
<dbReference type="SUPFAM" id="SSF54211">
    <property type="entry name" value="Ribosomal protein S5 domain 2-like"/>
    <property type="match status" value="1"/>
</dbReference>